<keyword id="KW-0963">Cytoplasm</keyword>
<keyword id="KW-0227">DNA damage</keyword>
<keyword id="KW-0233">DNA recombination</keyword>
<keyword id="KW-0234">DNA repair</keyword>
<keyword id="KW-0238">DNA-binding</keyword>
<comment type="function">
    <text evidence="1">The RuvA-RuvB-RuvC complex processes Holliday junction (HJ) DNA during genetic recombination and DNA repair, while the RuvA-RuvB complex plays an important role in the rescue of blocked DNA replication forks via replication fork reversal (RFR). RuvA specifically binds to HJ cruciform DNA, conferring on it an open structure. The RuvB hexamer acts as an ATP-dependent pump, pulling dsDNA into and through the RuvAB complex. HJ branch migration allows RuvC to scan DNA until it finds its consensus sequence, where it cleaves and resolves the cruciform DNA.</text>
</comment>
<comment type="subunit">
    <text evidence="1">Homotetramer. Forms an RuvA(8)-RuvB(12)-Holliday junction (HJ) complex. HJ DNA is sandwiched between 2 RuvA tetramers; dsDNA enters through RuvA and exits via RuvB. An RuvB hexamer assembles on each DNA strand where it exits the tetramer. Each RuvB hexamer is contacted by two RuvA subunits (via domain III) on 2 adjacent RuvB subunits; this complex drives branch migration. In the full resolvosome a probable DNA-RuvA(4)-RuvB(12)-RuvC(2) complex forms which resolves the HJ.</text>
</comment>
<comment type="subcellular location">
    <subcellularLocation>
        <location evidence="1">Cytoplasm</location>
    </subcellularLocation>
</comment>
<comment type="domain">
    <text evidence="1">Has three domains with a flexible linker between the domains II and III and assumes an 'L' shape. Domain III is highly mobile and contacts RuvB.</text>
</comment>
<comment type="similarity">
    <text evidence="1">Belongs to the RuvA family.</text>
</comment>
<accession>B5FSN7</accession>
<reference key="1">
    <citation type="journal article" date="2011" name="J. Bacteriol.">
        <title>Comparative genomics of 28 Salmonella enterica isolates: evidence for CRISPR-mediated adaptive sublineage evolution.</title>
        <authorList>
            <person name="Fricke W.F."/>
            <person name="Mammel M.K."/>
            <person name="McDermott P.F."/>
            <person name="Tartera C."/>
            <person name="White D.G."/>
            <person name="Leclerc J.E."/>
            <person name="Ravel J."/>
            <person name="Cebula T.A."/>
        </authorList>
    </citation>
    <scope>NUCLEOTIDE SEQUENCE [LARGE SCALE GENOMIC DNA]</scope>
    <source>
        <strain>CT_02021853</strain>
    </source>
</reference>
<sequence>MIGRLRGIILEKQPPIVLLETGGVGYEVHMPMTCFYELPEAGQEAIVFTHFVVREDAQLLYGFNNKQERTLFKELIKTNGVGPKLALAILSGMSAQQFVNAVEREELGALVKLPGIGKKTAERLIVEMKDRFKGLHGDLFTPAVDLVLTSPASPTSEDAEQEAVAALVALGYKPQEASRMVSKIARPDASSETLIRDALRAAL</sequence>
<proteinExistence type="inferred from homology"/>
<feature type="chain" id="PRO_1000090362" description="Holliday junction branch migration complex subunit RuvA">
    <location>
        <begin position="1"/>
        <end position="203"/>
    </location>
</feature>
<feature type="region of interest" description="Domain I" evidence="1">
    <location>
        <begin position="1"/>
        <end position="64"/>
    </location>
</feature>
<feature type="region of interest" description="Domain II" evidence="1">
    <location>
        <begin position="65"/>
        <end position="142"/>
    </location>
</feature>
<feature type="region of interest" description="Flexible linker" evidence="1">
    <location>
        <begin position="143"/>
        <end position="154"/>
    </location>
</feature>
<feature type="region of interest" description="Domain III" evidence="1">
    <location>
        <begin position="155"/>
        <end position="203"/>
    </location>
</feature>
<dbReference type="EMBL" id="CP001144">
    <property type="protein sequence ID" value="ACH74324.1"/>
    <property type="molecule type" value="Genomic_DNA"/>
</dbReference>
<dbReference type="RefSeq" id="WP_000580335.1">
    <property type="nucleotide sequence ID" value="NC_011205.1"/>
</dbReference>
<dbReference type="SMR" id="B5FSN7"/>
<dbReference type="KEGG" id="sed:SeD_A1353"/>
<dbReference type="HOGENOM" id="CLU_087936_0_0_6"/>
<dbReference type="Proteomes" id="UP000008322">
    <property type="component" value="Chromosome"/>
</dbReference>
<dbReference type="GO" id="GO:0005737">
    <property type="term" value="C:cytoplasm"/>
    <property type="evidence" value="ECO:0007669"/>
    <property type="project" value="UniProtKB-SubCell"/>
</dbReference>
<dbReference type="GO" id="GO:0009379">
    <property type="term" value="C:Holliday junction helicase complex"/>
    <property type="evidence" value="ECO:0007669"/>
    <property type="project" value="InterPro"/>
</dbReference>
<dbReference type="GO" id="GO:0048476">
    <property type="term" value="C:Holliday junction resolvase complex"/>
    <property type="evidence" value="ECO:0007669"/>
    <property type="project" value="UniProtKB-UniRule"/>
</dbReference>
<dbReference type="GO" id="GO:0005524">
    <property type="term" value="F:ATP binding"/>
    <property type="evidence" value="ECO:0007669"/>
    <property type="project" value="InterPro"/>
</dbReference>
<dbReference type="GO" id="GO:0000400">
    <property type="term" value="F:four-way junction DNA binding"/>
    <property type="evidence" value="ECO:0007669"/>
    <property type="project" value="UniProtKB-UniRule"/>
</dbReference>
<dbReference type="GO" id="GO:0009378">
    <property type="term" value="F:four-way junction helicase activity"/>
    <property type="evidence" value="ECO:0007669"/>
    <property type="project" value="InterPro"/>
</dbReference>
<dbReference type="GO" id="GO:0006310">
    <property type="term" value="P:DNA recombination"/>
    <property type="evidence" value="ECO:0007669"/>
    <property type="project" value="UniProtKB-UniRule"/>
</dbReference>
<dbReference type="GO" id="GO:0006281">
    <property type="term" value="P:DNA repair"/>
    <property type="evidence" value="ECO:0007669"/>
    <property type="project" value="UniProtKB-UniRule"/>
</dbReference>
<dbReference type="CDD" id="cd14332">
    <property type="entry name" value="UBA_RuvA_C"/>
    <property type="match status" value="1"/>
</dbReference>
<dbReference type="FunFam" id="1.10.150.20:FF:000012">
    <property type="entry name" value="Holliday junction ATP-dependent DNA helicase RuvA"/>
    <property type="match status" value="1"/>
</dbReference>
<dbReference type="FunFam" id="1.10.8.10:FF:000008">
    <property type="entry name" value="Holliday junction ATP-dependent DNA helicase RuvA"/>
    <property type="match status" value="1"/>
</dbReference>
<dbReference type="FunFam" id="2.40.50.140:FF:000083">
    <property type="entry name" value="Holliday junction ATP-dependent DNA helicase RuvA"/>
    <property type="match status" value="1"/>
</dbReference>
<dbReference type="Gene3D" id="1.10.150.20">
    <property type="entry name" value="5' to 3' exonuclease, C-terminal subdomain"/>
    <property type="match status" value="1"/>
</dbReference>
<dbReference type="Gene3D" id="1.10.8.10">
    <property type="entry name" value="DNA helicase RuvA subunit, C-terminal domain"/>
    <property type="match status" value="1"/>
</dbReference>
<dbReference type="Gene3D" id="2.40.50.140">
    <property type="entry name" value="Nucleic acid-binding proteins"/>
    <property type="match status" value="1"/>
</dbReference>
<dbReference type="HAMAP" id="MF_00031">
    <property type="entry name" value="DNA_HJ_migration_RuvA"/>
    <property type="match status" value="1"/>
</dbReference>
<dbReference type="InterPro" id="IPR013849">
    <property type="entry name" value="DNA_helicase_Holl-junc_RuvA_I"/>
</dbReference>
<dbReference type="InterPro" id="IPR003583">
    <property type="entry name" value="Hlx-hairpin-Hlx_DNA-bd_motif"/>
</dbReference>
<dbReference type="InterPro" id="IPR012340">
    <property type="entry name" value="NA-bd_OB-fold"/>
</dbReference>
<dbReference type="InterPro" id="IPR000085">
    <property type="entry name" value="RuvA"/>
</dbReference>
<dbReference type="InterPro" id="IPR010994">
    <property type="entry name" value="RuvA_2-like"/>
</dbReference>
<dbReference type="InterPro" id="IPR011114">
    <property type="entry name" value="RuvA_C"/>
</dbReference>
<dbReference type="InterPro" id="IPR036267">
    <property type="entry name" value="RuvA_C_sf"/>
</dbReference>
<dbReference type="NCBIfam" id="TIGR00084">
    <property type="entry name" value="ruvA"/>
    <property type="match status" value="1"/>
</dbReference>
<dbReference type="Pfam" id="PF14520">
    <property type="entry name" value="HHH_5"/>
    <property type="match status" value="1"/>
</dbReference>
<dbReference type="Pfam" id="PF07499">
    <property type="entry name" value="RuvA_C"/>
    <property type="match status" value="1"/>
</dbReference>
<dbReference type="Pfam" id="PF01330">
    <property type="entry name" value="RuvA_N"/>
    <property type="match status" value="1"/>
</dbReference>
<dbReference type="SMART" id="SM00278">
    <property type="entry name" value="HhH1"/>
    <property type="match status" value="2"/>
</dbReference>
<dbReference type="SUPFAM" id="SSF46929">
    <property type="entry name" value="DNA helicase RuvA subunit, C-terminal domain"/>
    <property type="match status" value="1"/>
</dbReference>
<dbReference type="SUPFAM" id="SSF50249">
    <property type="entry name" value="Nucleic acid-binding proteins"/>
    <property type="match status" value="1"/>
</dbReference>
<dbReference type="SUPFAM" id="SSF47781">
    <property type="entry name" value="RuvA domain 2-like"/>
    <property type="match status" value="1"/>
</dbReference>
<gene>
    <name evidence="1" type="primary">ruvA</name>
    <name type="ordered locus">SeD_A1353</name>
</gene>
<evidence type="ECO:0000255" key="1">
    <source>
        <dbReference type="HAMAP-Rule" id="MF_00031"/>
    </source>
</evidence>
<protein>
    <recommendedName>
        <fullName evidence="1">Holliday junction branch migration complex subunit RuvA</fullName>
    </recommendedName>
</protein>
<organism>
    <name type="scientific">Salmonella dublin (strain CT_02021853)</name>
    <dbReference type="NCBI Taxonomy" id="439851"/>
    <lineage>
        <taxon>Bacteria</taxon>
        <taxon>Pseudomonadati</taxon>
        <taxon>Pseudomonadota</taxon>
        <taxon>Gammaproteobacteria</taxon>
        <taxon>Enterobacterales</taxon>
        <taxon>Enterobacteriaceae</taxon>
        <taxon>Salmonella</taxon>
    </lineage>
</organism>
<name>RUVA_SALDC</name>